<proteinExistence type="evidence at transcript level"/>
<feature type="chain" id="PRO_0000304901" description="Secretory carrier-associated membrane protein 2">
    <location>
        <begin position="1"/>
        <end position="283"/>
    </location>
</feature>
<feature type="topological domain" description="Cytoplasmic" evidence="2">
    <location>
        <begin position="1"/>
        <end position="123"/>
    </location>
</feature>
<feature type="transmembrane region" description="Helical" evidence="2">
    <location>
        <begin position="124"/>
        <end position="144"/>
    </location>
</feature>
<feature type="transmembrane region" description="Helical" evidence="2">
    <location>
        <begin position="151"/>
        <end position="171"/>
    </location>
</feature>
<feature type="transmembrane region" description="Helical" evidence="2">
    <location>
        <begin position="186"/>
        <end position="206"/>
    </location>
</feature>
<feature type="transmembrane region" description="Helical" evidence="2">
    <location>
        <begin position="234"/>
        <end position="254"/>
    </location>
</feature>
<feature type="topological domain" description="Cytoplasmic" evidence="2">
    <location>
        <begin position="255"/>
        <end position="283"/>
    </location>
</feature>
<feature type="region of interest" description="Disordered" evidence="3">
    <location>
        <begin position="1"/>
        <end position="47"/>
    </location>
</feature>
<feature type="coiled-coil region" evidence="2">
    <location>
        <begin position="50"/>
        <end position="87"/>
    </location>
</feature>
<feature type="compositionally biased region" description="Polar residues" evidence="3">
    <location>
        <begin position="18"/>
        <end position="30"/>
    </location>
</feature>
<dbReference type="EMBL" id="AC002560">
    <property type="protein sequence ID" value="AAF86532.1"/>
    <property type="molecule type" value="Genomic_DNA"/>
</dbReference>
<dbReference type="EMBL" id="CP002684">
    <property type="protein sequence ID" value="AEE27585.1"/>
    <property type="molecule type" value="Genomic_DNA"/>
</dbReference>
<dbReference type="EMBL" id="BT024511">
    <property type="protein sequence ID" value="ABD19692.1"/>
    <property type="molecule type" value="mRNA"/>
</dbReference>
<dbReference type="EMBL" id="AY086966">
    <property type="protein sequence ID" value="AAM64529.1"/>
    <property type="molecule type" value="mRNA"/>
</dbReference>
<dbReference type="RefSeq" id="NP_563686.1">
    <property type="nucleotide sequence ID" value="NM_100237.1"/>
</dbReference>
<dbReference type="SMR" id="Q9LR68"/>
<dbReference type="FunCoup" id="Q9LR68">
    <property type="interactions" value="1593"/>
</dbReference>
<dbReference type="STRING" id="3702.Q9LR68"/>
<dbReference type="GlyGen" id="Q9LR68">
    <property type="glycosylation" value="2 sites"/>
</dbReference>
<dbReference type="PaxDb" id="3702-AT1G03550.1"/>
<dbReference type="EnsemblPlants" id="AT1G03550.1">
    <property type="protein sequence ID" value="AT1G03550.1"/>
    <property type="gene ID" value="AT1G03550"/>
</dbReference>
<dbReference type="GeneID" id="839464"/>
<dbReference type="Gramene" id="AT1G03550.1">
    <property type="protein sequence ID" value="AT1G03550.1"/>
    <property type="gene ID" value="AT1G03550"/>
</dbReference>
<dbReference type="KEGG" id="ath:AT1G03550"/>
<dbReference type="Araport" id="AT1G03550"/>
<dbReference type="TAIR" id="AT1G03550">
    <property type="gene designation" value="SCAMP4"/>
</dbReference>
<dbReference type="eggNOG" id="KOG3088">
    <property type="taxonomic scope" value="Eukaryota"/>
</dbReference>
<dbReference type="HOGENOM" id="CLU_066546_3_0_1"/>
<dbReference type="InParanoid" id="Q9LR68"/>
<dbReference type="OrthoDB" id="242866at2759"/>
<dbReference type="PhylomeDB" id="Q9LR68"/>
<dbReference type="PRO" id="PR:Q9LR68"/>
<dbReference type="Proteomes" id="UP000006548">
    <property type="component" value="Chromosome 1"/>
</dbReference>
<dbReference type="ExpressionAtlas" id="Q9LR68">
    <property type="expression patterns" value="baseline and differential"/>
</dbReference>
<dbReference type="GO" id="GO:0005886">
    <property type="term" value="C:plasma membrane"/>
    <property type="evidence" value="ECO:0007669"/>
    <property type="project" value="UniProtKB-SubCell"/>
</dbReference>
<dbReference type="GO" id="GO:0030658">
    <property type="term" value="C:transport vesicle membrane"/>
    <property type="evidence" value="ECO:0007669"/>
    <property type="project" value="UniProtKB-SubCell"/>
</dbReference>
<dbReference type="GO" id="GO:0015031">
    <property type="term" value="P:protein transport"/>
    <property type="evidence" value="ECO:0007669"/>
    <property type="project" value="InterPro"/>
</dbReference>
<dbReference type="InterPro" id="IPR007273">
    <property type="entry name" value="SCAMP"/>
</dbReference>
<dbReference type="PANTHER" id="PTHR10687:SF56">
    <property type="entry name" value="SECRETORY CARRIER-ASSOCIATED MEMBRANE PROTEIN 2"/>
    <property type="match status" value="1"/>
</dbReference>
<dbReference type="PANTHER" id="PTHR10687">
    <property type="entry name" value="SECRETORY CARRIER-ASSOCIATED MEMBRANE PROTEIN SCAMP"/>
    <property type="match status" value="1"/>
</dbReference>
<dbReference type="Pfam" id="PF04144">
    <property type="entry name" value="SCAMP"/>
    <property type="match status" value="1"/>
</dbReference>
<organism>
    <name type="scientific">Arabidopsis thaliana</name>
    <name type="common">Mouse-ear cress</name>
    <dbReference type="NCBI Taxonomy" id="3702"/>
    <lineage>
        <taxon>Eukaryota</taxon>
        <taxon>Viridiplantae</taxon>
        <taxon>Streptophyta</taxon>
        <taxon>Embryophyta</taxon>
        <taxon>Tracheophyta</taxon>
        <taxon>Spermatophyta</taxon>
        <taxon>Magnoliopsida</taxon>
        <taxon>eudicotyledons</taxon>
        <taxon>Gunneridae</taxon>
        <taxon>Pentapetalae</taxon>
        <taxon>rosids</taxon>
        <taxon>malvids</taxon>
        <taxon>Brassicales</taxon>
        <taxon>Brassicaceae</taxon>
        <taxon>Camelineae</taxon>
        <taxon>Arabidopsis</taxon>
    </lineage>
</organism>
<comment type="function">
    <text evidence="1">Probably involved in membrane trafficking.</text>
</comment>
<comment type="subcellular location">
    <subcellularLocation>
        <location evidence="1">Cell membrane</location>
        <topology evidence="1">Multi-pass membrane protein</topology>
    </subcellularLocation>
    <subcellularLocation>
        <location evidence="1">Cytoplasmic vesicle</location>
        <location evidence="1">Secretory vesicle membrane</location>
        <topology evidence="1">Multi-pass membrane protein</topology>
    </subcellularLocation>
</comment>
<comment type="similarity">
    <text evidence="4">Belongs to the SCAMP family.</text>
</comment>
<evidence type="ECO:0000250" key="1"/>
<evidence type="ECO:0000255" key="2"/>
<evidence type="ECO:0000256" key="3">
    <source>
        <dbReference type="SAM" id="MobiDB-lite"/>
    </source>
</evidence>
<evidence type="ECO:0000305" key="4"/>
<keyword id="KW-1003">Cell membrane</keyword>
<keyword id="KW-0175">Coiled coil</keyword>
<keyword id="KW-0968">Cytoplasmic vesicle</keyword>
<keyword id="KW-0472">Membrane</keyword>
<keyword id="KW-1185">Reference proteome</keyword>
<keyword id="KW-0812">Transmembrane</keyword>
<keyword id="KW-1133">Transmembrane helix</keyword>
<keyword id="KW-0813">Transport</keyword>
<reference key="1">
    <citation type="journal article" date="2000" name="Nature">
        <title>Sequence and analysis of chromosome 1 of the plant Arabidopsis thaliana.</title>
        <authorList>
            <person name="Theologis A."/>
            <person name="Ecker J.R."/>
            <person name="Palm C.J."/>
            <person name="Federspiel N.A."/>
            <person name="Kaul S."/>
            <person name="White O."/>
            <person name="Alonso J."/>
            <person name="Altafi H."/>
            <person name="Araujo R."/>
            <person name="Bowman C.L."/>
            <person name="Brooks S.Y."/>
            <person name="Buehler E."/>
            <person name="Chan A."/>
            <person name="Chao Q."/>
            <person name="Chen H."/>
            <person name="Cheuk R.F."/>
            <person name="Chin C.W."/>
            <person name="Chung M.K."/>
            <person name="Conn L."/>
            <person name="Conway A.B."/>
            <person name="Conway A.R."/>
            <person name="Creasy T.H."/>
            <person name="Dewar K."/>
            <person name="Dunn P."/>
            <person name="Etgu P."/>
            <person name="Feldblyum T.V."/>
            <person name="Feng J.-D."/>
            <person name="Fong B."/>
            <person name="Fujii C.Y."/>
            <person name="Gill J.E."/>
            <person name="Goldsmith A.D."/>
            <person name="Haas B."/>
            <person name="Hansen N.F."/>
            <person name="Hughes B."/>
            <person name="Huizar L."/>
            <person name="Hunter J.L."/>
            <person name="Jenkins J."/>
            <person name="Johnson-Hopson C."/>
            <person name="Khan S."/>
            <person name="Khaykin E."/>
            <person name="Kim C.J."/>
            <person name="Koo H.L."/>
            <person name="Kremenetskaia I."/>
            <person name="Kurtz D.B."/>
            <person name="Kwan A."/>
            <person name="Lam B."/>
            <person name="Langin-Hooper S."/>
            <person name="Lee A."/>
            <person name="Lee J.M."/>
            <person name="Lenz C.A."/>
            <person name="Li J.H."/>
            <person name="Li Y.-P."/>
            <person name="Lin X."/>
            <person name="Liu S.X."/>
            <person name="Liu Z.A."/>
            <person name="Luros J.S."/>
            <person name="Maiti R."/>
            <person name="Marziali A."/>
            <person name="Militscher J."/>
            <person name="Miranda M."/>
            <person name="Nguyen M."/>
            <person name="Nierman W.C."/>
            <person name="Osborne B.I."/>
            <person name="Pai G."/>
            <person name="Peterson J."/>
            <person name="Pham P.K."/>
            <person name="Rizzo M."/>
            <person name="Rooney T."/>
            <person name="Rowley D."/>
            <person name="Sakano H."/>
            <person name="Salzberg S.L."/>
            <person name="Schwartz J.R."/>
            <person name="Shinn P."/>
            <person name="Southwick A.M."/>
            <person name="Sun H."/>
            <person name="Tallon L.J."/>
            <person name="Tambunga G."/>
            <person name="Toriumi M.J."/>
            <person name="Town C.D."/>
            <person name="Utterback T."/>
            <person name="Van Aken S."/>
            <person name="Vaysberg M."/>
            <person name="Vysotskaia V.S."/>
            <person name="Walker M."/>
            <person name="Wu D."/>
            <person name="Yu G."/>
            <person name="Fraser C.M."/>
            <person name="Venter J.C."/>
            <person name="Davis R.W."/>
        </authorList>
    </citation>
    <scope>NUCLEOTIDE SEQUENCE [LARGE SCALE GENOMIC DNA]</scope>
    <source>
        <strain>cv. Columbia</strain>
    </source>
</reference>
<reference key="2">
    <citation type="journal article" date="2017" name="Plant J.">
        <title>Araport11: a complete reannotation of the Arabidopsis thaliana reference genome.</title>
        <authorList>
            <person name="Cheng C.Y."/>
            <person name="Krishnakumar V."/>
            <person name="Chan A.P."/>
            <person name="Thibaud-Nissen F."/>
            <person name="Schobel S."/>
            <person name="Town C.D."/>
        </authorList>
    </citation>
    <scope>GENOME REANNOTATION</scope>
    <source>
        <strain>cv. Columbia</strain>
    </source>
</reference>
<reference key="3">
    <citation type="submission" date="2006-02" db="EMBL/GenBank/DDBJ databases">
        <title>Arabidopsis ORF clones.</title>
        <authorList>
            <person name="Shinn P."/>
            <person name="Chen H."/>
            <person name="Kim C.J."/>
            <person name="Ecker J.R."/>
        </authorList>
    </citation>
    <scope>NUCLEOTIDE SEQUENCE [LARGE SCALE MRNA]</scope>
    <source>
        <strain>cv. Columbia</strain>
    </source>
</reference>
<reference key="4">
    <citation type="submission" date="2002-03" db="EMBL/GenBank/DDBJ databases">
        <title>Full-length cDNA from Arabidopsis thaliana.</title>
        <authorList>
            <person name="Brover V.V."/>
            <person name="Troukhan M.E."/>
            <person name="Alexandrov N.A."/>
            <person name="Lu Y.-P."/>
            <person name="Flavell R.B."/>
            <person name="Feldmann K.A."/>
        </authorList>
    </citation>
    <scope>NUCLEOTIDE SEQUENCE [LARGE SCALE MRNA]</scope>
</reference>
<reference key="5">
    <citation type="journal article" date="2000" name="Mol. Biol. Cell">
        <title>The secretory carrier membrane protein family: structure and membrane topology.</title>
        <authorList>
            <person name="Hubbard C."/>
            <person name="Singleton D."/>
            <person name="Rauch M."/>
            <person name="Jayasinghe S."/>
            <person name="Cafiso D."/>
            <person name="Castle D."/>
        </authorList>
    </citation>
    <scope>GENE FAMILY</scope>
    <scope>NOMENCLATURE</scope>
</reference>
<sequence>MARHDPNPFADEEINPFANHTSVPPASNSYLKPLPPEPYDRGATVDIPLDSGNDLRAKEMELQAKENELKRKEQELKRREDAIARTGVVIEEKNWPEFFPLIHHDIPNEIPIHLQKIQYVAFTTLLGLVGCLLWNIVAVTVAWIKGEGPTIWLLSIIYFLAGVPGAYVLWYRPLYRATRTDSALKFGAFFFFYVFHIAFCGFAAVAPPVIFQGKSLTGFLPAIELLTTNAAVGIMYFIGAGFFCIETLLNIWVIQQVYAYFRGSGKAAEMKREATKSTLMRAL</sequence>
<gene>
    <name type="primary">SCAMP2</name>
    <name type="synonym">SC2</name>
    <name type="ordered locus">At1g03550</name>
    <name type="ORF">F21B7.17</name>
</gene>
<protein>
    <recommendedName>
        <fullName>Secretory carrier-associated membrane protein 2</fullName>
        <shortName>AtSC2</shortName>
        <shortName>Secretory carrier membrane protein 2</shortName>
    </recommendedName>
</protein>
<accession>Q9LR68</accession>
<name>SCAM2_ARATH</name>